<feature type="signal peptide" evidence="4">
    <location>
        <begin position="1"/>
        <end position="11"/>
    </location>
</feature>
<feature type="chain" id="PRO_0000296710" description="Patatin-2-Kuras 1">
    <location>
        <begin position="12"/>
        <end position="374"/>
    </location>
</feature>
<feature type="domain" description="PNPLA" evidence="3">
    <location>
        <begin position="20"/>
        <end position="217"/>
    </location>
</feature>
<feature type="coiled-coil region" evidence="2">
    <location>
        <begin position="309"/>
        <end position="372"/>
    </location>
</feature>
<feature type="short sequence motif" description="GXGXXG" evidence="3">
    <location>
        <begin position="24"/>
        <end position="29"/>
    </location>
</feature>
<feature type="short sequence motif" description="GXSXG" evidence="3">
    <location>
        <begin position="63"/>
        <end position="67"/>
    </location>
</feature>
<feature type="short sequence motif" description="DGA/G" evidence="3">
    <location>
        <begin position="203"/>
        <end position="205"/>
    </location>
</feature>
<feature type="active site" description="Nucleophile" evidence="3">
    <location>
        <position position="65"/>
    </location>
</feature>
<feature type="active site" description="Proton acceptor" evidence="3">
    <location>
        <position position="203"/>
    </location>
</feature>
<feature type="glycosylation site" description="N-linked (GlcNAc...) asparagine" evidence="2">
    <location>
        <position position="103"/>
    </location>
</feature>
<keyword id="KW-0175">Coiled coil</keyword>
<keyword id="KW-0903">Direct protein sequencing</keyword>
<keyword id="KW-0325">Glycoprotein</keyword>
<keyword id="KW-0378">Hydrolase</keyword>
<keyword id="KW-0442">Lipid degradation</keyword>
<keyword id="KW-0443">Lipid metabolism</keyword>
<keyword id="KW-0611">Plant defense</keyword>
<keyword id="KW-1185">Reference proteome</keyword>
<keyword id="KW-0732">Signal</keyword>
<keyword id="KW-0758">Storage protein</keyword>
<keyword id="KW-0926">Vacuole</keyword>
<accession>Q3YJT3</accession>
<evidence type="ECO:0000250" key="1"/>
<evidence type="ECO:0000255" key="2"/>
<evidence type="ECO:0000255" key="3">
    <source>
        <dbReference type="PROSITE-ProRule" id="PRU01161"/>
    </source>
</evidence>
<evidence type="ECO:0000269" key="4">
    <source>
    </source>
</evidence>
<evidence type="ECO:0000305" key="5"/>
<gene>
    <name type="primary">pat2-k1</name>
</gene>
<comment type="function">
    <text evidence="1">Probable lipolytic acyl hydrolase (LAH), an activity which is thought to be involved in the response of tubers to pathogens.</text>
</comment>
<comment type="subcellular location">
    <subcellularLocation>
        <location evidence="1">Vacuole</location>
    </subcellularLocation>
</comment>
<comment type="tissue specificity">
    <text evidence="4">Tuber.</text>
</comment>
<comment type="domain">
    <text>The nitrogen atoms of the two glycine residues in the GGXR motif define the oxyanion hole, and stabilize the oxyanion that forms during the nucleophilic attack by the catalytic serine during substrate cleavage.</text>
</comment>
<comment type="miscellaneous">
    <text>Patatin have a dual role as a somatic storage protein and as an enzyme involved in host resistance.</text>
</comment>
<comment type="similarity">
    <text evidence="5">Belongs to the patatin family.</text>
</comment>
<protein>
    <recommendedName>
        <fullName>Patatin-2-Kuras 1</fullName>
        <ecNumber>3.1.1.-</ecNumber>
    </recommendedName>
</protein>
<reference key="1">
    <citation type="journal article" date="2006" name="FEBS J.">
        <title>Patatins, Kunitz protease inhibitors and other major proteins in tuber of potato cv. Kuras.</title>
        <authorList>
            <person name="Bauw G."/>
            <person name="Nielsen H.V."/>
            <person name="Emmersen J."/>
            <person name="Nielsen K.L."/>
            <person name="Joergensen M."/>
            <person name="Welinder K.G."/>
        </authorList>
    </citation>
    <scope>NUCLEOTIDE SEQUENCE [MRNA]</scope>
    <scope>PROTEIN SEQUENCE OF 12-88; 131-155; 223-234; 240-270; 299-306 AND 340-359</scope>
    <scope>TISSUE SPECIFICITY</scope>
    <scope>IDENTIFICATION BY MASS SPECTROMETRY</scope>
    <source>
        <strain>cv. Kuras</strain>
        <tissue>Tuber</tissue>
    </source>
</reference>
<proteinExistence type="evidence at protein level"/>
<sequence>MILATTGSTCATLGEMVTVLSIDGGGIKGIIPATILEFLEGQLQEVDNNKDARLADYFDVIGGTSTGGLLTAMITTPNENNRPFAAAKDIVPFYFEHGPHIFNSSGTIFGPMYDGKYLLQVLQEKLGETRVHQALTEVAISSFDIKTNKPVIFTKSNLAKSPELDAKMYDICYSTAAAPIYFPPHYFVTHTSNGDRYEFNLVDGAVATVGDPALLSLSVATRLAQEDPAFSSIKSLDYKQMLLLSLGTGTNSEFDKTYTAEEAAKWGPLRWLLAIQQMTNAASSYMTDYYLSTVFQARHSQNNYLRVQENALTGTTTEMDDASEANMELLVQVGETLLKKPVSKDSPETYEEALKRFAKLLSDRKKLRANKASY</sequence>
<organism>
    <name type="scientific">Solanum tuberosum</name>
    <name type="common">Potato</name>
    <dbReference type="NCBI Taxonomy" id="4113"/>
    <lineage>
        <taxon>Eukaryota</taxon>
        <taxon>Viridiplantae</taxon>
        <taxon>Streptophyta</taxon>
        <taxon>Embryophyta</taxon>
        <taxon>Tracheophyta</taxon>
        <taxon>Spermatophyta</taxon>
        <taxon>Magnoliopsida</taxon>
        <taxon>eudicotyledons</taxon>
        <taxon>Gunneridae</taxon>
        <taxon>Pentapetalae</taxon>
        <taxon>asterids</taxon>
        <taxon>lamiids</taxon>
        <taxon>Solanales</taxon>
        <taxon>Solanaceae</taxon>
        <taxon>Solanoideae</taxon>
        <taxon>Solaneae</taxon>
        <taxon>Solanum</taxon>
    </lineage>
</organism>
<name>PT2K1_SOLTU</name>
<dbReference type="EC" id="3.1.1.-"/>
<dbReference type="EMBL" id="DQ114417">
    <property type="protein sequence ID" value="AAZ75958.1"/>
    <property type="molecule type" value="mRNA"/>
</dbReference>
<dbReference type="SMR" id="Q3YJT3"/>
<dbReference type="GlyCosmos" id="Q3YJT3">
    <property type="glycosylation" value="1 site, No reported glycans"/>
</dbReference>
<dbReference type="InParanoid" id="Q3YJT3"/>
<dbReference type="Proteomes" id="UP000011115">
    <property type="component" value="Unassembled WGS sequence"/>
</dbReference>
<dbReference type="ExpressionAtlas" id="Q3YJT3">
    <property type="expression patterns" value="baseline"/>
</dbReference>
<dbReference type="GO" id="GO:0005773">
    <property type="term" value="C:vacuole"/>
    <property type="evidence" value="ECO:0007669"/>
    <property type="project" value="UniProtKB-SubCell"/>
</dbReference>
<dbReference type="GO" id="GO:0047372">
    <property type="term" value="F:monoacylglycerol lipase activity"/>
    <property type="evidence" value="ECO:0000318"/>
    <property type="project" value="GO_Central"/>
</dbReference>
<dbReference type="GO" id="GO:0045735">
    <property type="term" value="F:nutrient reservoir activity"/>
    <property type="evidence" value="ECO:0007669"/>
    <property type="project" value="UniProtKB-KW"/>
</dbReference>
<dbReference type="GO" id="GO:0004620">
    <property type="term" value="F:phospholipase activity"/>
    <property type="evidence" value="ECO:0000318"/>
    <property type="project" value="GO_Central"/>
</dbReference>
<dbReference type="GO" id="GO:0006952">
    <property type="term" value="P:defense response"/>
    <property type="evidence" value="ECO:0007669"/>
    <property type="project" value="UniProtKB-KW"/>
</dbReference>
<dbReference type="GO" id="GO:0016042">
    <property type="term" value="P:lipid catabolic process"/>
    <property type="evidence" value="ECO:0007669"/>
    <property type="project" value="UniProtKB-KW"/>
</dbReference>
<dbReference type="Gene3D" id="3.40.1090.10">
    <property type="entry name" value="Cytosolic phospholipase A2 catalytic domain"/>
    <property type="match status" value="1"/>
</dbReference>
<dbReference type="InterPro" id="IPR016035">
    <property type="entry name" value="Acyl_Trfase/lysoPLipase"/>
</dbReference>
<dbReference type="InterPro" id="IPR002641">
    <property type="entry name" value="PNPLA_dom"/>
</dbReference>
<dbReference type="PANTHER" id="PTHR32176:SF85">
    <property type="entry name" value="PATATIN GROUP D-2"/>
    <property type="match status" value="1"/>
</dbReference>
<dbReference type="PANTHER" id="PTHR32176">
    <property type="entry name" value="XYLOSE ISOMERASE"/>
    <property type="match status" value="1"/>
</dbReference>
<dbReference type="Pfam" id="PF01734">
    <property type="entry name" value="Patatin"/>
    <property type="match status" value="1"/>
</dbReference>
<dbReference type="SUPFAM" id="SSF52151">
    <property type="entry name" value="FabD/lysophospholipase-like"/>
    <property type="match status" value="1"/>
</dbReference>
<dbReference type="PROSITE" id="PS51635">
    <property type="entry name" value="PNPLA"/>
    <property type="match status" value="1"/>
</dbReference>